<name>FPG_GLAP5</name>
<accession>B8F586</accession>
<keyword id="KW-0227">DNA damage</keyword>
<keyword id="KW-0234">DNA repair</keyword>
<keyword id="KW-0238">DNA-binding</keyword>
<keyword id="KW-0326">Glycosidase</keyword>
<keyword id="KW-0378">Hydrolase</keyword>
<keyword id="KW-0456">Lyase</keyword>
<keyword id="KW-0479">Metal-binding</keyword>
<keyword id="KW-0511">Multifunctional enzyme</keyword>
<keyword id="KW-1185">Reference proteome</keyword>
<keyword id="KW-0862">Zinc</keyword>
<keyword id="KW-0863">Zinc-finger</keyword>
<dbReference type="EC" id="3.2.2.23" evidence="2"/>
<dbReference type="EC" id="4.2.99.18" evidence="2"/>
<dbReference type="EMBL" id="CP001321">
    <property type="protein sequence ID" value="ACL32488.1"/>
    <property type="molecule type" value="Genomic_DNA"/>
</dbReference>
<dbReference type="RefSeq" id="WP_005713993.1">
    <property type="nucleotide sequence ID" value="NC_011852.1"/>
</dbReference>
<dbReference type="SMR" id="B8F586"/>
<dbReference type="STRING" id="557723.HAPS_0857"/>
<dbReference type="KEGG" id="hap:HAPS_0857"/>
<dbReference type="HOGENOM" id="CLU_038423_1_1_6"/>
<dbReference type="Proteomes" id="UP000006743">
    <property type="component" value="Chromosome"/>
</dbReference>
<dbReference type="GO" id="GO:0034039">
    <property type="term" value="F:8-oxo-7,8-dihydroguanine DNA N-glycosylase activity"/>
    <property type="evidence" value="ECO:0007669"/>
    <property type="project" value="TreeGrafter"/>
</dbReference>
<dbReference type="GO" id="GO:0140078">
    <property type="term" value="F:class I DNA-(apurinic or apyrimidinic site) endonuclease activity"/>
    <property type="evidence" value="ECO:0007669"/>
    <property type="project" value="UniProtKB-EC"/>
</dbReference>
<dbReference type="GO" id="GO:0003684">
    <property type="term" value="F:damaged DNA binding"/>
    <property type="evidence" value="ECO:0007669"/>
    <property type="project" value="InterPro"/>
</dbReference>
<dbReference type="GO" id="GO:0008270">
    <property type="term" value="F:zinc ion binding"/>
    <property type="evidence" value="ECO:0007669"/>
    <property type="project" value="UniProtKB-UniRule"/>
</dbReference>
<dbReference type="GO" id="GO:0006284">
    <property type="term" value="P:base-excision repair"/>
    <property type="evidence" value="ECO:0007669"/>
    <property type="project" value="InterPro"/>
</dbReference>
<dbReference type="CDD" id="cd08966">
    <property type="entry name" value="EcFpg-like_N"/>
    <property type="match status" value="1"/>
</dbReference>
<dbReference type="FunFam" id="1.10.8.50:FF:000003">
    <property type="entry name" value="Formamidopyrimidine-DNA glycosylase"/>
    <property type="match status" value="1"/>
</dbReference>
<dbReference type="FunFam" id="3.20.190.10:FF:000001">
    <property type="entry name" value="Formamidopyrimidine-DNA glycosylase"/>
    <property type="match status" value="1"/>
</dbReference>
<dbReference type="Gene3D" id="1.10.8.50">
    <property type="match status" value="1"/>
</dbReference>
<dbReference type="Gene3D" id="3.20.190.10">
    <property type="entry name" value="MutM-like, N-terminal"/>
    <property type="match status" value="1"/>
</dbReference>
<dbReference type="HAMAP" id="MF_00103">
    <property type="entry name" value="Fapy_DNA_glycosyl"/>
    <property type="match status" value="1"/>
</dbReference>
<dbReference type="InterPro" id="IPR015886">
    <property type="entry name" value="DNA_glyclase/AP_lyase_DNA-bd"/>
</dbReference>
<dbReference type="InterPro" id="IPR015887">
    <property type="entry name" value="DNA_glyclase_Znf_dom_DNA_BS"/>
</dbReference>
<dbReference type="InterPro" id="IPR020629">
    <property type="entry name" value="Formamido-pyr_DNA_Glyclase"/>
</dbReference>
<dbReference type="InterPro" id="IPR012319">
    <property type="entry name" value="FPG_cat"/>
</dbReference>
<dbReference type="InterPro" id="IPR035937">
    <property type="entry name" value="MutM-like_N-ter"/>
</dbReference>
<dbReference type="InterPro" id="IPR010979">
    <property type="entry name" value="Ribosomal_uS13-like_H2TH"/>
</dbReference>
<dbReference type="InterPro" id="IPR000214">
    <property type="entry name" value="Znf_DNA_glyclase/AP_lyase"/>
</dbReference>
<dbReference type="InterPro" id="IPR010663">
    <property type="entry name" value="Znf_FPG/IleRS"/>
</dbReference>
<dbReference type="NCBIfam" id="TIGR00577">
    <property type="entry name" value="fpg"/>
    <property type="match status" value="1"/>
</dbReference>
<dbReference type="NCBIfam" id="NF002211">
    <property type="entry name" value="PRK01103.1"/>
    <property type="match status" value="1"/>
</dbReference>
<dbReference type="PANTHER" id="PTHR22993">
    <property type="entry name" value="FORMAMIDOPYRIMIDINE-DNA GLYCOSYLASE"/>
    <property type="match status" value="1"/>
</dbReference>
<dbReference type="PANTHER" id="PTHR22993:SF9">
    <property type="entry name" value="FORMAMIDOPYRIMIDINE-DNA GLYCOSYLASE"/>
    <property type="match status" value="1"/>
</dbReference>
<dbReference type="Pfam" id="PF01149">
    <property type="entry name" value="Fapy_DNA_glyco"/>
    <property type="match status" value="1"/>
</dbReference>
<dbReference type="Pfam" id="PF06831">
    <property type="entry name" value="H2TH"/>
    <property type="match status" value="1"/>
</dbReference>
<dbReference type="Pfam" id="PF06827">
    <property type="entry name" value="zf-FPG_IleRS"/>
    <property type="match status" value="1"/>
</dbReference>
<dbReference type="SMART" id="SM00898">
    <property type="entry name" value="Fapy_DNA_glyco"/>
    <property type="match status" value="1"/>
</dbReference>
<dbReference type="SMART" id="SM01232">
    <property type="entry name" value="H2TH"/>
    <property type="match status" value="1"/>
</dbReference>
<dbReference type="SUPFAM" id="SSF57716">
    <property type="entry name" value="Glucocorticoid receptor-like (DNA-binding domain)"/>
    <property type="match status" value="1"/>
</dbReference>
<dbReference type="SUPFAM" id="SSF81624">
    <property type="entry name" value="N-terminal domain of MutM-like DNA repair proteins"/>
    <property type="match status" value="1"/>
</dbReference>
<dbReference type="SUPFAM" id="SSF46946">
    <property type="entry name" value="S13-like H2TH domain"/>
    <property type="match status" value="1"/>
</dbReference>
<dbReference type="PROSITE" id="PS51068">
    <property type="entry name" value="FPG_CAT"/>
    <property type="match status" value="1"/>
</dbReference>
<dbReference type="PROSITE" id="PS01242">
    <property type="entry name" value="ZF_FPG_1"/>
    <property type="match status" value="1"/>
</dbReference>
<dbReference type="PROSITE" id="PS51066">
    <property type="entry name" value="ZF_FPG_2"/>
    <property type="match status" value="1"/>
</dbReference>
<gene>
    <name evidence="2" type="primary">mutM</name>
    <name evidence="2" type="synonym">fpg</name>
    <name type="ordered locus">HAPS_0857</name>
</gene>
<sequence length="274" mass="30486">MPELPEVETSMRGISPYLVGQKIKEIIVRQPKLRWAVSSELSTMQGATIIEIYRRAKYLIIQTDKGDILVHLGMSGSLGILSVKENKAIDKHDHIDLITENGVILRYNDPRKFGTWLWAEQAETAELLANLGPEPLSEAFTSGYLFEKSRNKTVAVKNFIMNNAIVVGVGNIYACESLFMAGIHPELAAQNLTAKQCERLVTVIKEVLTKAIIQGGTTLKDFIQPDGKPGYFAQVLQVYGRKGEECNDCGSIIEAKVIGQRNSFYCPKCQRLPK</sequence>
<feature type="initiator methionine" description="Removed" evidence="1">
    <location>
        <position position="1"/>
    </location>
</feature>
<feature type="chain" id="PRO_1000118891" description="Formamidopyrimidine-DNA glycosylase">
    <location>
        <begin position="2"/>
        <end position="274"/>
    </location>
</feature>
<feature type="zinc finger region" description="FPG-type" evidence="2">
    <location>
        <begin position="237"/>
        <end position="271"/>
    </location>
</feature>
<feature type="active site" description="Schiff-base intermediate with DNA" evidence="2">
    <location>
        <position position="2"/>
    </location>
</feature>
<feature type="active site" description="Proton donor" evidence="2">
    <location>
        <position position="3"/>
    </location>
</feature>
<feature type="active site" description="Proton donor; for beta-elimination activity" evidence="2">
    <location>
        <position position="57"/>
    </location>
</feature>
<feature type="active site" description="Proton donor; for delta-elimination activity" evidence="2">
    <location>
        <position position="261"/>
    </location>
</feature>
<feature type="binding site" evidence="2">
    <location>
        <position position="92"/>
    </location>
    <ligand>
        <name>DNA</name>
        <dbReference type="ChEBI" id="CHEBI:16991"/>
    </ligand>
</feature>
<feature type="binding site" evidence="2">
    <location>
        <position position="111"/>
    </location>
    <ligand>
        <name>DNA</name>
        <dbReference type="ChEBI" id="CHEBI:16991"/>
    </ligand>
</feature>
<feature type="binding site" evidence="2">
    <location>
        <position position="152"/>
    </location>
    <ligand>
        <name>DNA</name>
        <dbReference type="ChEBI" id="CHEBI:16991"/>
    </ligand>
</feature>
<protein>
    <recommendedName>
        <fullName evidence="2">Formamidopyrimidine-DNA glycosylase</fullName>
        <shortName evidence="2">Fapy-DNA glycosylase</shortName>
        <ecNumber evidence="2">3.2.2.23</ecNumber>
    </recommendedName>
    <alternativeName>
        <fullName evidence="2">DNA-(apurinic or apyrimidinic site) lyase MutM</fullName>
        <shortName evidence="2">AP lyase MutM</shortName>
        <ecNumber evidence="2">4.2.99.18</ecNumber>
    </alternativeName>
</protein>
<organism>
    <name type="scientific">Glaesserella parasuis serovar 5 (strain SH0165)</name>
    <name type="common">Haemophilus parasuis</name>
    <dbReference type="NCBI Taxonomy" id="557723"/>
    <lineage>
        <taxon>Bacteria</taxon>
        <taxon>Pseudomonadati</taxon>
        <taxon>Pseudomonadota</taxon>
        <taxon>Gammaproteobacteria</taxon>
        <taxon>Pasteurellales</taxon>
        <taxon>Pasteurellaceae</taxon>
        <taxon>Glaesserella</taxon>
    </lineage>
</organism>
<reference key="1">
    <citation type="journal article" date="2009" name="J. Bacteriol.">
        <title>Complete genome sequence of Haemophilus parasuis SH0165.</title>
        <authorList>
            <person name="Yue M."/>
            <person name="Yang F."/>
            <person name="Yang J."/>
            <person name="Bei W."/>
            <person name="Cai X."/>
            <person name="Chen L."/>
            <person name="Dong J."/>
            <person name="Zhou R."/>
            <person name="Jin M."/>
            <person name="Jin Q."/>
            <person name="Chen H."/>
        </authorList>
    </citation>
    <scope>NUCLEOTIDE SEQUENCE [LARGE SCALE GENOMIC DNA]</scope>
    <source>
        <strain>SH0165</strain>
    </source>
</reference>
<comment type="function">
    <text evidence="2">Involved in base excision repair of DNA damaged by oxidation or by mutagenic agents. Acts as a DNA glycosylase that recognizes and removes damaged bases. Has a preference for oxidized purines, such as 7,8-dihydro-8-oxoguanine (8-oxoG). Has AP (apurinic/apyrimidinic) lyase activity and introduces nicks in the DNA strand. Cleaves the DNA backbone by beta-delta elimination to generate a single-strand break at the site of the removed base with both 3'- and 5'-phosphates.</text>
</comment>
<comment type="catalytic activity">
    <reaction evidence="2">
        <text>Hydrolysis of DNA containing ring-opened 7-methylguanine residues, releasing 2,6-diamino-4-hydroxy-5-(N-methyl)formamidopyrimidine.</text>
        <dbReference type="EC" id="3.2.2.23"/>
    </reaction>
</comment>
<comment type="catalytic activity">
    <reaction evidence="2">
        <text>2'-deoxyribonucleotide-(2'-deoxyribose 5'-phosphate)-2'-deoxyribonucleotide-DNA = a 3'-end 2'-deoxyribonucleotide-(2,3-dehydro-2,3-deoxyribose 5'-phosphate)-DNA + a 5'-end 5'-phospho-2'-deoxyribonucleoside-DNA + H(+)</text>
        <dbReference type="Rhea" id="RHEA:66592"/>
        <dbReference type="Rhea" id="RHEA-COMP:13180"/>
        <dbReference type="Rhea" id="RHEA-COMP:16897"/>
        <dbReference type="Rhea" id="RHEA-COMP:17067"/>
        <dbReference type="ChEBI" id="CHEBI:15378"/>
        <dbReference type="ChEBI" id="CHEBI:136412"/>
        <dbReference type="ChEBI" id="CHEBI:157695"/>
        <dbReference type="ChEBI" id="CHEBI:167181"/>
        <dbReference type="EC" id="4.2.99.18"/>
    </reaction>
</comment>
<comment type="cofactor">
    <cofactor evidence="2">
        <name>Zn(2+)</name>
        <dbReference type="ChEBI" id="CHEBI:29105"/>
    </cofactor>
    <text evidence="2">Binds 1 zinc ion per subunit.</text>
</comment>
<comment type="subunit">
    <text evidence="2">Monomer.</text>
</comment>
<comment type="similarity">
    <text evidence="2">Belongs to the FPG family.</text>
</comment>
<proteinExistence type="inferred from homology"/>
<evidence type="ECO:0000250" key="1"/>
<evidence type="ECO:0000255" key="2">
    <source>
        <dbReference type="HAMAP-Rule" id="MF_00103"/>
    </source>
</evidence>